<name>HSE1_NEUCR</name>
<organism>
    <name type="scientific">Neurospora crassa (strain ATCC 24698 / 74-OR23-1A / CBS 708.71 / DSM 1257 / FGSC 987)</name>
    <dbReference type="NCBI Taxonomy" id="367110"/>
    <lineage>
        <taxon>Eukaryota</taxon>
        <taxon>Fungi</taxon>
        <taxon>Dikarya</taxon>
        <taxon>Ascomycota</taxon>
        <taxon>Pezizomycotina</taxon>
        <taxon>Sordariomycetes</taxon>
        <taxon>Sordariomycetidae</taxon>
        <taxon>Sordariales</taxon>
        <taxon>Sordariaceae</taxon>
        <taxon>Neurospora</taxon>
    </lineage>
</organism>
<gene>
    <name type="primary">hse1</name>
    <name type="ORF">NCU04841</name>
</gene>
<protein>
    <recommendedName>
        <fullName>Class E vacuolar protein-sorting machinery protein hse1</fullName>
    </recommendedName>
</protein>
<reference key="1">
    <citation type="journal article" date="2003" name="Nature">
        <title>The genome sequence of the filamentous fungus Neurospora crassa.</title>
        <authorList>
            <person name="Galagan J.E."/>
            <person name="Calvo S.E."/>
            <person name="Borkovich K.A."/>
            <person name="Selker E.U."/>
            <person name="Read N.D."/>
            <person name="Jaffe D.B."/>
            <person name="FitzHugh W."/>
            <person name="Ma L.-J."/>
            <person name="Smirnov S."/>
            <person name="Purcell S."/>
            <person name="Rehman B."/>
            <person name="Elkins T."/>
            <person name="Engels R."/>
            <person name="Wang S."/>
            <person name="Nielsen C.B."/>
            <person name="Butler J."/>
            <person name="Endrizzi M."/>
            <person name="Qui D."/>
            <person name="Ianakiev P."/>
            <person name="Bell-Pedersen D."/>
            <person name="Nelson M.A."/>
            <person name="Werner-Washburne M."/>
            <person name="Selitrennikoff C.P."/>
            <person name="Kinsey J.A."/>
            <person name="Braun E.L."/>
            <person name="Zelter A."/>
            <person name="Schulte U."/>
            <person name="Kothe G.O."/>
            <person name="Jedd G."/>
            <person name="Mewes H.-W."/>
            <person name="Staben C."/>
            <person name="Marcotte E."/>
            <person name="Greenberg D."/>
            <person name="Roy A."/>
            <person name="Foley K."/>
            <person name="Naylor J."/>
            <person name="Stange-Thomann N."/>
            <person name="Barrett R."/>
            <person name="Gnerre S."/>
            <person name="Kamal M."/>
            <person name="Kamvysselis M."/>
            <person name="Mauceli E.W."/>
            <person name="Bielke C."/>
            <person name="Rudd S."/>
            <person name="Frishman D."/>
            <person name="Krystofova S."/>
            <person name="Rasmussen C."/>
            <person name="Metzenberg R.L."/>
            <person name="Perkins D.D."/>
            <person name="Kroken S."/>
            <person name="Cogoni C."/>
            <person name="Macino G."/>
            <person name="Catcheside D.E.A."/>
            <person name="Li W."/>
            <person name="Pratt R.J."/>
            <person name="Osmani S.A."/>
            <person name="DeSouza C.P.C."/>
            <person name="Glass N.L."/>
            <person name="Orbach M.J."/>
            <person name="Berglund J.A."/>
            <person name="Voelker R."/>
            <person name="Yarden O."/>
            <person name="Plamann M."/>
            <person name="Seiler S."/>
            <person name="Dunlap J.C."/>
            <person name="Radford A."/>
            <person name="Aramayo R."/>
            <person name="Natvig D.O."/>
            <person name="Alex L.A."/>
            <person name="Mannhaupt G."/>
            <person name="Ebbole D.J."/>
            <person name="Freitag M."/>
            <person name="Paulsen I."/>
            <person name="Sachs M.S."/>
            <person name="Lander E.S."/>
            <person name="Nusbaum C."/>
            <person name="Birren B.W."/>
        </authorList>
    </citation>
    <scope>NUCLEOTIDE SEQUENCE [LARGE SCALE GENOMIC DNA]</scope>
    <source>
        <strain>ATCC 24698 / 74-OR23-1A / CBS 708.71 / DSM 1257 / FGSC 987</strain>
    </source>
</reference>
<dbReference type="EMBL" id="CM002241">
    <property type="protein sequence ID" value="EAA31164.1"/>
    <property type="molecule type" value="Genomic_DNA"/>
</dbReference>
<dbReference type="RefSeq" id="XP_960400.1">
    <property type="nucleotide sequence ID" value="XM_955307.3"/>
</dbReference>
<dbReference type="SMR" id="Q7S6J4"/>
<dbReference type="FunCoup" id="Q7S6J4">
    <property type="interactions" value="332"/>
</dbReference>
<dbReference type="STRING" id="367110.Q7S6J4"/>
<dbReference type="PaxDb" id="5141-EFNCRP00000004591"/>
<dbReference type="EnsemblFungi" id="EAA31164">
    <property type="protein sequence ID" value="EAA31164"/>
    <property type="gene ID" value="NCU04841"/>
</dbReference>
<dbReference type="GeneID" id="3876538"/>
<dbReference type="KEGG" id="ncr:NCU04841"/>
<dbReference type="VEuPathDB" id="FungiDB:NCU04841"/>
<dbReference type="HOGENOM" id="CLU_010104_1_1_1"/>
<dbReference type="InParanoid" id="Q7S6J4"/>
<dbReference type="OMA" id="GLMEECY"/>
<dbReference type="OrthoDB" id="10255964at2759"/>
<dbReference type="Proteomes" id="UP000001805">
    <property type="component" value="Chromosome 5, Linkage Group VI"/>
</dbReference>
<dbReference type="GO" id="GO:0010008">
    <property type="term" value="C:endosome membrane"/>
    <property type="evidence" value="ECO:0007669"/>
    <property type="project" value="UniProtKB-SubCell"/>
</dbReference>
<dbReference type="GO" id="GO:0033565">
    <property type="term" value="C:ESCRT-0 complex"/>
    <property type="evidence" value="ECO:0000318"/>
    <property type="project" value="GO_Central"/>
</dbReference>
<dbReference type="GO" id="GO:0035091">
    <property type="term" value="F:phosphatidylinositol binding"/>
    <property type="evidence" value="ECO:0007669"/>
    <property type="project" value="InterPro"/>
</dbReference>
<dbReference type="GO" id="GO:0043130">
    <property type="term" value="F:ubiquitin binding"/>
    <property type="evidence" value="ECO:0007669"/>
    <property type="project" value="InterPro"/>
</dbReference>
<dbReference type="GO" id="GO:0043328">
    <property type="term" value="P:protein transport to vacuole involved in ubiquitin-dependent protein catabolic process via the multivesicular body sorting pathway"/>
    <property type="evidence" value="ECO:0000318"/>
    <property type="project" value="GO_Central"/>
</dbReference>
<dbReference type="CDD" id="cd21386">
    <property type="entry name" value="GAT_Hse1"/>
    <property type="match status" value="1"/>
</dbReference>
<dbReference type="CDD" id="cd11805">
    <property type="entry name" value="SH3_GRB2_like_C"/>
    <property type="match status" value="1"/>
</dbReference>
<dbReference type="CDD" id="cd16978">
    <property type="entry name" value="VHS_HSE1"/>
    <property type="match status" value="1"/>
</dbReference>
<dbReference type="FunFam" id="2.30.30.40:FF:000072">
    <property type="entry name" value="Unconventional Myosin IB"/>
    <property type="match status" value="1"/>
</dbReference>
<dbReference type="Gene3D" id="1.20.5.1940">
    <property type="match status" value="1"/>
</dbReference>
<dbReference type="Gene3D" id="1.25.40.90">
    <property type="match status" value="1"/>
</dbReference>
<dbReference type="Gene3D" id="2.30.30.40">
    <property type="entry name" value="SH3 Domains"/>
    <property type="match status" value="1"/>
</dbReference>
<dbReference type="InterPro" id="IPR008942">
    <property type="entry name" value="ENTH_VHS"/>
</dbReference>
<dbReference type="InterPro" id="IPR004152">
    <property type="entry name" value="GAT_dom"/>
</dbReference>
<dbReference type="InterPro" id="IPR036028">
    <property type="entry name" value="SH3-like_dom_sf"/>
</dbReference>
<dbReference type="InterPro" id="IPR001452">
    <property type="entry name" value="SH3_domain"/>
</dbReference>
<dbReference type="InterPro" id="IPR050670">
    <property type="entry name" value="STAM"/>
</dbReference>
<dbReference type="InterPro" id="IPR003903">
    <property type="entry name" value="UIM_dom"/>
</dbReference>
<dbReference type="InterPro" id="IPR002014">
    <property type="entry name" value="VHS_dom"/>
</dbReference>
<dbReference type="PANTHER" id="PTHR45929">
    <property type="entry name" value="JAK PATHWAY SIGNAL TRANSDUCTION ADAPTOR MOLECULE"/>
    <property type="match status" value="1"/>
</dbReference>
<dbReference type="PANTHER" id="PTHR45929:SF3">
    <property type="entry name" value="JAK PATHWAY SIGNAL TRANSDUCTION ADAPTOR MOLECULE"/>
    <property type="match status" value="1"/>
</dbReference>
<dbReference type="Pfam" id="PF03127">
    <property type="entry name" value="GAT"/>
    <property type="match status" value="1"/>
</dbReference>
<dbReference type="Pfam" id="PF00018">
    <property type="entry name" value="SH3_1"/>
    <property type="match status" value="1"/>
</dbReference>
<dbReference type="Pfam" id="PF00790">
    <property type="entry name" value="VHS"/>
    <property type="match status" value="1"/>
</dbReference>
<dbReference type="PRINTS" id="PR00499">
    <property type="entry name" value="P67PHOX"/>
</dbReference>
<dbReference type="PRINTS" id="PR00452">
    <property type="entry name" value="SH3DOMAIN"/>
</dbReference>
<dbReference type="SMART" id="SM00326">
    <property type="entry name" value="SH3"/>
    <property type="match status" value="1"/>
</dbReference>
<dbReference type="SMART" id="SM00288">
    <property type="entry name" value="VHS"/>
    <property type="match status" value="1"/>
</dbReference>
<dbReference type="SUPFAM" id="SSF48464">
    <property type="entry name" value="ENTH/VHS domain"/>
    <property type="match status" value="1"/>
</dbReference>
<dbReference type="SUPFAM" id="SSF50044">
    <property type="entry name" value="SH3-domain"/>
    <property type="match status" value="1"/>
</dbReference>
<dbReference type="PROSITE" id="PS50002">
    <property type="entry name" value="SH3"/>
    <property type="match status" value="1"/>
</dbReference>
<dbReference type="PROSITE" id="PS50330">
    <property type="entry name" value="UIM"/>
    <property type="match status" value="1"/>
</dbReference>
<dbReference type="PROSITE" id="PS50179">
    <property type="entry name" value="VHS"/>
    <property type="match status" value="1"/>
</dbReference>
<sequence>MFRAAAAGPYDEAINKATDENLTSEDWGAIMEVCDRVATDANGAKEAVNSMIKRLAHRNANVQLYTLEVANALSQNCGKNMHRELSSRAFTDALLKLANDRNTHTQVKAKILERMKEWSDMFKSDSDLGIMYDAYYRLKQSNPTLQPPSAPQKNVLTDADRQKEEEELQMALQLSLQEEERKKRPAGASGATASSSSGGAAAGPSNAGGAVASGEGTNSTAGQAEATPQPVPSSTTAATVSRVRALYDFVPSEPGELEFKKGDVIAVLKSVYKDWWSGSLKGKTGIFPLNYVEKLADPTPEELQREAQMEAEVFAEIKNVEKLLTLLSAGNTGPREEDNEEISKLYHQTLAIRPKLIKLIEKYSQKKDDFTQLNEKFIKARRDYEALLESSMSHPPGPTYHQYAMRPPMTNSYGSGGYGAPPPQQQQEPPRFYNPAPAQDAPQYPATSPSPNPNHFIRPAGTPAPYYMGGAEGPGQLQHQQQPPYPQQQPQPAYGAPSRPQDQQRNPSGPSPMAPAPLNTTSSPPPGNQYTPYQAPGASGANNRTNSYSSTNGGAPQELSTSAYDSPIAQHSTNPLSNPSYNAPSAPSYSQGRPGAPTDDPYGPTSPGAGSSNNVGSAPPPPSGPAPSGPAPSAPSAPSAPSAPGAPNSYTQGAYHSQNPYAAAAAAAAAAASRTHVPGVYDGAGSEVSSTAPQPPAALQPGGGAQPQYKAYVPPGAPSAPGSGQEGPSAPGQNDGLADYYRSAY</sequence>
<proteinExistence type="inferred from homology"/>
<feature type="chain" id="PRO_0000292500" description="Class E vacuolar protein-sorting machinery protein hse1">
    <location>
        <begin position="1"/>
        <end position="745"/>
    </location>
</feature>
<feature type="domain" description="VHS" evidence="4">
    <location>
        <begin position="17"/>
        <end position="146"/>
    </location>
</feature>
<feature type="domain" description="UIM" evidence="3">
    <location>
        <begin position="163"/>
        <end position="182"/>
    </location>
</feature>
<feature type="domain" description="SH3" evidence="2">
    <location>
        <begin position="238"/>
        <end position="297"/>
    </location>
</feature>
<feature type="region of interest" description="Disordered" evidence="5">
    <location>
        <begin position="142"/>
        <end position="237"/>
    </location>
</feature>
<feature type="region of interest" description="Disordered" evidence="5">
    <location>
        <begin position="390"/>
        <end position="745"/>
    </location>
</feature>
<feature type="compositionally biased region" description="Low complexity" evidence="5">
    <location>
        <begin position="186"/>
        <end position="214"/>
    </location>
</feature>
<feature type="compositionally biased region" description="Low complexity" evidence="5">
    <location>
        <begin position="425"/>
        <end position="446"/>
    </location>
</feature>
<feature type="compositionally biased region" description="Polar residues" evidence="5">
    <location>
        <begin position="518"/>
        <end position="532"/>
    </location>
</feature>
<feature type="compositionally biased region" description="Polar residues" evidence="5">
    <location>
        <begin position="540"/>
        <end position="576"/>
    </location>
</feature>
<feature type="compositionally biased region" description="Low complexity" evidence="5">
    <location>
        <begin position="577"/>
        <end position="590"/>
    </location>
</feature>
<feature type="compositionally biased region" description="Pro residues" evidence="5">
    <location>
        <begin position="618"/>
        <end position="635"/>
    </location>
</feature>
<feature type="compositionally biased region" description="Low complexity" evidence="5">
    <location>
        <begin position="636"/>
        <end position="647"/>
    </location>
</feature>
<feature type="compositionally biased region" description="Polar residues" evidence="5">
    <location>
        <begin position="648"/>
        <end position="660"/>
    </location>
</feature>
<feature type="compositionally biased region" description="Low complexity" evidence="5">
    <location>
        <begin position="662"/>
        <end position="672"/>
    </location>
</feature>
<feature type="compositionally biased region" description="Low complexity" evidence="5">
    <location>
        <begin position="719"/>
        <end position="733"/>
    </location>
</feature>
<comment type="function">
    <text evidence="1">Component of the ESCRT-0 complex which is the sorting receptor for ubiquitinated cargo proteins at the multivesicular body (MVB).</text>
</comment>
<comment type="subunit">
    <text evidence="1">Component of the ESCRT-0 complex composed of hse1 and vps27.</text>
</comment>
<comment type="subcellular location">
    <subcellularLocation>
        <location evidence="1">Endosome membrane</location>
        <topology evidence="1">Peripheral membrane protein</topology>
        <orientation evidence="1">Cytoplasmic side</orientation>
    </subcellularLocation>
</comment>
<comment type="similarity">
    <text evidence="6">Belongs to the STAM family.</text>
</comment>
<evidence type="ECO:0000250" key="1"/>
<evidence type="ECO:0000255" key="2">
    <source>
        <dbReference type="PROSITE-ProRule" id="PRU00192"/>
    </source>
</evidence>
<evidence type="ECO:0000255" key="3">
    <source>
        <dbReference type="PROSITE-ProRule" id="PRU00213"/>
    </source>
</evidence>
<evidence type="ECO:0000255" key="4">
    <source>
        <dbReference type="PROSITE-ProRule" id="PRU00218"/>
    </source>
</evidence>
<evidence type="ECO:0000256" key="5">
    <source>
        <dbReference type="SAM" id="MobiDB-lite"/>
    </source>
</evidence>
<evidence type="ECO:0000305" key="6"/>
<accession>Q7S6J4</accession>
<keyword id="KW-0967">Endosome</keyword>
<keyword id="KW-0472">Membrane</keyword>
<keyword id="KW-0653">Protein transport</keyword>
<keyword id="KW-1185">Reference proteome</keyword>
<keyword id="KW-0728">SH3 domain</keyword>
<keyword id="KW-0813">Transport</keyword>